<dbReference type="EC" id="1.2.1.71" evidence="1"/>
<dbReference type="EMBL" id="AE005674">
    <property type="protein sequence ID" value="AAN43073.1"/>
    <property type="status" value="ALT_FRAME"/>
    <property type="molecule type" value="Genomic_DNA"/>
</dbReference>
<dbReference type="EMBL" id="AE014073">
    <property type="protein sequence ID" value="AAP16966.1"/>
    <property type="molecule type" value="Genomic_DNA"/>
</dbReference>
<dbReference type="RefSeq" id="NP_707366.3">
    <property type="nucleotide sequence ID" value="NC_004337.2"/>
</dbReference>
<dbReference type="RefSeq" id="WP_000177221.1">
    <property type="nucleotide sequence ID" value="NZ_WPGW01000081.1"/>
</dbReference>
<dbReference type="SMR" id="Q7UCI7"/>
<dbReference type="STRING" id="198214.SF1480"/>
<dbReference type="PaxDb" id="198214-SF1480"/>
<dbReference type="KEGG" id="sfl:SF1480"/>
<dbReference type="KEGG" id="sfx:S1597"/>
<dbReference type="PATRIC" id="fig|198214.7.peg.1746"/>
<dbReference type="HOGENOM" id="CLU_005391_1_0_6"/>
<dbReference type="UniPathway" id="UPA00185">
    <property type="reaction ID" value="UER00282"/>
</dbReference>
<dbReference type="Proteomes" id="UP000001006">
    <property type="component" value="Chromosome"/>
</dbReference>
<dbReference type="Proteomes" id="UP000002673">
    <property type="component" value="Chromosome"/>
</dbReference>
<dbReference type="GO" id="GO:0043824">
    <property type="term" value="F:succinylglutamate-semialdehyde dehydrogenase activity"/>
    <property type="evidence" value="ECO:0007669"/>
    <property type="project" value="UniProtKB-EC"/>
</dbReference>
<dbReference type="GO" id="GO:0019544">
    <property type="term" value="P:arginine catabolic process to glutamate"/>
    <property type="evidence" value="ECO:0007669"/>
    <property type="project" value="UniProtKB-UniRule"/>
</dbReference>
<dbReference type="GO" id="GO:0019545">
    <property type="term" value="P:arginine catabolic process to succinate"/>
    <property type="evidence" value="ECO:0007669"/>
    <property type="project" value="UniProtKB-UniRule"/>
</dbReference>
<dbReference type="CDD" id="cd07095">
    <property type="entry name" value="ALDH_SGSD_AstD"/>
    <property type="match status" value="1"/>
</dbReference>
<dbReference type="FunFam" id="3.40.309.10:FF:000013">
    <property type="entry name" value="N-succinylglutamate 5-semialdehyde dehydrogenase"/>
    <property type="match status" value="1"/>
</dbReference>
<dbReference type="FunFam" id="3.40.605.10:FF:000010">
    <property type="entry name" value="N-succinylglutamate 5-semialdehyde dehydrogenase"/>
    <property type="match status" value="1"/>
</dbReference>
<dbReference type="Gene3D" id="3.40.605.10">
    <property type="entry name" value="Aldehyde Dehydrogenase, Chain A, domain 1"/>
    <property type="match status" value="1"/>
</dbReference>
<dbReference type="Gene3D" id="3.40.309.10">
    <property type="entry name" value="Aldehyde Dehydrogenase, Chain A, domain 2"/>
    <property type="match status" value="1"/>
</dbReference>
<dbReference type="HAMAP" id="MF_01174">
    <property type="entry name" value="Aldedh_AstD"/>
    <property type="match status" value="1"/>
</dbReference>
<dbReference type="InterPro" id="IPR016161">
    <property type="entry name" value="Ald_DH/histidinol_DH"/>
</dbReference>
<dbReference type="InterPro" id="IPR016163">
    <property type="entry name" value="Ald_DH_C"/>
</dbReference>
<dbReference type="InterPro" id="IPR016160">
    <property type="entry name" value="Ald_DH_CS_CYS"/>
</dbReference>
<dbReference type="InterPro" id="IPR029510">
    <property type="entry name" value="Ald_DH_CS_GLU"/>
</dbReference>
<dbReference type="InterPro" id="IPR016162">
    <property type="entry name" value="Ald_DH_N"/>
</dbReference>
<dbReference type="InterPro" id="IPR015590">
    <property type="entry name" value="Aldehyde_DH_dom"/>
</dbReference>
<dbReference type="InterPro" id="IPR017649">
    <property type="entry name" value="SuccinylGlu_semiald_DH_AstD"/>
</dbReference>
<dbReference type="NCBIfam" id="TIGR03240">
    <property type="entry name" value="arg_catab_astD"/>
    <property type="match status" value="1"/>
</dbReference>
<dbReference type="NCBIfam" id="NF006992">
    <property type="entry name" value="PRK09457.1"/>
    <property type="match status" value="1"/>
</dbReference>
<dbReference type="PANTHER" id="PTHR11699">
    <property type="entry name" value="ALDEHYDE DEHYDROGENASE-RELATED"/>
    <property type="match status" value="1"/>
</dbReference>
<dbReference type="Pfam" id="PF00171">
    <property type="entry name" value="Aldedh"/>
    <property type="match status" value="1"/>
</dbReference>
<dbReference type="SUPFAM" id="SSF53720">
    <property type="entry name" value="ALDH-like"/>
    <property type="match status" value="1"/>
</dbReference>
<dbReference type="PROSITE" id="PS00070">
    <property type="entry name" value="ALDEHYDE_DEHYDR_CYS"/>
    <property type="match status" value="1"/>
</dbReference>
<dbReference type="PROSITE" id="PS00687">
    <property type="entry name" value="ALDEHYDE_DEHYDR_GLU"/>
    <property type="match status" value="1"/>
</dbReference>
<feature type="chain" id="PRO_0000262429" description="N-succinylglutamate 5-semialdehyde dehydrogenase">
    <location>
        <begin position="1"/>
        <end position="492"/>
    </location>
</feature>
<feature type="active site" evidence="1">
    <location>
        <position position="243"/>
    </location>
</feature>
<feature type="active site" evidence="1">
    <location>
        <position position="277"/>
    </location>
</feature>
<feature type="binding site" evidence="1">
    <location>
        <begin position="220"/>
        <end position="225"/>
    </location>
    <ligand>
        <name>NAD(+)</name>
        <dbReference type="ChEBI" id="CHEBI:57540"/>
    </ligand>
</feature>
<sequence length="492" mass="53012">MTLWINGDWITGQGASRVKRNPVSGEVLWQGNDADAAQVEQACRAARAAFPRWARLSLAERQVVVERFAGLLESNKAELTAIIARETGKPRWEAATEVTAMINKIAISIKAYHVRTGEQRSEMPDGAASLRHRPHGVLAVFGPYNFPGHLPNGHIVPALLAGNTIIFKPSELTPWSGEAVMRLWQQAGLPPGVLNLVQGGRETGQALSALEDLDGLLFTGSANTGYQLHRQLSGQPEKILALEMGGNNPLIIDEVADIDAAVHLTIQSAFVTAGQRCTCARRLLLKSGAQGDAFLASLVAVSQRLTPGNWDDEPQPFIGGLISEQAAQQVVTAWQQLEAMGGRTLLAPRLLQAGTSLLTPGIIEMTGVGGVPDEEVFGPFLRVWRYDTFDEAIRMANNTRFGLFCGLVSPEREKFDQLLLEARAGIVNWNKPLTGAASTAPFGGIGASGNHRPSAWYAADYCAWPMASLESDSLTLPATLNPGLDFSDEVVR</sequence>
<accession>Q7UCI7</accession>
<accession>Q83L51</accession>
<name>ASTD_SHIFL</name>
<proteinExistence type="inferred from homology"/>
<keyword id="KW-0056">Arginine metabolism</keyword>
<keyword id="KW-0520">NAD</keyword>
<keyword id="KW-0560">Oxidoreductase</keyword>
<keyword id="KW-1185">Reference proteome</keyword>
<evidence type="ECO:0000255" key="1">
    <source>
        <dbReference type="HAMAP-Rule" id="MF_01174"/>
    </source>
</evidence>
<evidence type="ECO:0000305" key="2"/>
<reference key="1">
    <citation type="journal article" date="2002" name="Nucleic Acids Res.">
        <title>Genome sequence of Shigella flexneri 2a: insights into pathogenicity through comparison with genomes of Escherichia coli K12 and O157.</title>
        <authorList>
            <person name="Jin Q."/>
            <person name="Yuan Z."/>
            <person name="Xu J."/>
            <person name="Wang Y."/>
            <person name="Shen Y."/>
            <person name="Lu W."/>
            <person name="Wang J."/>
            <person name="Liu H."/>
            <person name="Yang J."/>
            <person name="Yang F."/>
            <person name="Zhang X."/>
            <person name="Zhang J."/>
            <person name="Yang G."/>
            <person name="Wu H."/>
            <person name="Qu D."/>
            <person name="Dong J."/>
            <person name="Sun L."/>
            <person name="Xue Y."/>
            <person name="Zhao A."/>
            <person name="Gao Y."/>
            <person name="Zhu J."/>
            <person name="Kan B."/>
            <person name="Ding K."/>
            <person name="Chen S."/>
            <person name="Cheng H."/>
            <person name="Yao Z."/>
            <person name="He B."/>
            <person name="Chen R."/>
            <person name="Ma D."/>
            <person name="Qiang B."/>
            <person name="Wen Y."/>
            <person name="Hou Y."/>
            <person name="Yu J."/>
        </authorList>
    </citation>
    <scope>NUCLEOTIDE SEQUENCE [LARGE SCALE GENOMIC DNA]</scope>
    <source>
        <strain>301 / Serotype 2a</strain>
    </source>
</reference>
<reference key="2">
    <citation type="journal article" date="2003" name="Infect. Immun.">
        <title>Complete genome sequence and comparative genomics of Shigella flexneri serotype 2a strain 2457T.</title>
        <authorList>
            <person name="Wei J."/>
            <person name="Goldberg M.B."/>
            <person name="Burland V."/>
            <person name="Venkatesan M.M."/>
            <person name="Deng W."/>
            <person name="Fournier G."/>
            <person name="Mayhew G.F."/>
            <person name="Plunkett G. III"/>
            <person name="Rose D.J."/>
            <person name="Darling A."/>
            <person name="Mau B."/>
            <person name="Perna N.T."/>
            <person name="Payne S.M."/>
            <person name="Runyen-Janecky L.J."/>
            <person name="Zhou S."/>
            <person name="Schwartz D.C."/>
            <person name="Blattner F.R."/>
        </authorList>
    </citation>
    <scope>NUCLEOTIDE SEQUENCE [LARGE SCALE GENOMIC DNA]</scope>
    <source>
        <strain>ATCC 700930 / 2457T / Serotype 2a</strain>
    </source>
</reference>
<protein>
    <recommendedName>
        <fullName evidence="1">N-succinylglutamate 5-semialdehyde dehydrogenase</fullName>
        <ecNumber evidence="1">1.2.1.71</ecNumber>
    </recommendedName>
    <alternativeName>
        <fullName evidence="1">Succinylglutamic semialdehyde dehydrogenase</fullName>
        <shortName evidence="1">SGSD</shortName>
    </alternativeName>
</protein>
<gene>
    <name evidence="1" type="primary">astD</name>
    <name type="ordered locus">SF1479.1</name>
    <name type="ordered locus">S1597</name>
</gene>
<comment type="function">
    <text evidence="1">Catalyzes the NAD-dependent reduction of succinylglutamate semialdehyde into succinylglutamate.</text>
</comment>
<comment type="catalytic activity">
    <reaction evidence="1">
        <text>N-succinyl-L-glutamate 5-semialdehyde + NAD(+) + H2O = N-succinyl-L-glutamate + NADH + 2 H(+)</text>
        <dbReference type="Rhea" id="RHEA:10812"/>
        <dbReference type="ChEBI" id="CHEBI:15377"/>
        <dbReference type="ChEBI" id="CHEBI:15378"/>
        <dbReference type="ChEBI" id="CHEBI:57540"/>
        <dbReference type="ChEBI" id="CHEBI:57945"/>
        <dbReference type="ChEBI" id="CHEBI:58520"/>
        <dbReference type="ChEBI" id="CHEBI:58763"/>
        <dbReference type="EC" id="1.2.1.71"/>
    </reaction>
</comment>
<comment type="pathway">
    <text evidence="1">Amino-acid degradation; L-arginine degradation via AST pathway; L-glutamate and succinate from L-arginine: step 4/5.</text>
</comment>
<comment type="similarity">
    <text evidence="1">Belongs to the aldehyde dehydrogenase family. AstD subfamily.</text>
</comment>
<comment type="sequence caution" evidence="2">
    <conflict type="frameshift">
        <sequence resource="EMBL-CDS" id="AAN43073"/>
    </conflict>
</comment>
<organism>
    <name type="scientific">Shigella flexneri</name>
    <dbReference type="NCBI Taxonomy" id="623"/>
    <lineage>
        <taxon>Bacteria</taxon>
        <taxon>Pseudomonadati</taxon>
        <taxon>Pseudomonadota</taxon>
        <taxon>Gammaproteobacteria</taxon>
        <taxon>Enterobacterales</taxon>
        <taxon>Enterobacteriaceae</taxon>
        <taxon>Shigella</taxon>
    </lineage>
</organism>